<feature type="chain" id="PRO_0000079067" description="Nucleoprotein">
    <location>
        <begin position="1"/>
        <end position="498"/>
    </location>
</feature>
<feature type="region of interest" description="Disordered" evidence="2">
    <location>
        <begin position="1"/>
        <end position="22"/>
    </location>
</feature>
<feature type="short sequence motif" description="Unconventional nuclear localization signal" evidence="1">
    <location>
        <begin position="1"/>
        <end position="18"/>
    </location>
</feature>
<feature type="short sequence motif" description="Bipartite nuclear localization signal" evidence="1">
    <location>
        <begin position="198"/>
        <end position="216"/>
    </location>
</feature>
<feature type="sequence conflict" description="In Ref. 1; AAA43108." ref="1">
    <original>T</original>
    <variation>A</variation>
    <location>
        <position position="85"/>
    </location>
</feature>
<feature type="sequence conflict" description="In Ref. 1; AAA43108." ref="1">
    <original>K</original>
    <variation>R</variation>
    <location>
        <position position="99"/>
    </location>
</feature>
<feature type="sequence conflict" description="In Ref. 1; AAA43108." ref="1">
    <original>I</original>
    <variation>N</variation>
    <location>
        <position position="194"/>
    </location>
</feature>
<feature type="sequence conflict" description="In Ref. 1; AAA43108." ref="1">
    <original>I</original>
    <variation>M</variation>
    <location>
        <position position="374"/>
    </location>
</feature>
<feature type="sequence conflict" description="In Ref. 1; AAA43108." ref="1">
    <original>S</original>
    <variation>N</variation>
    <location>
        <position position="397"/>
    </location>
</feature>
<feature type="sequence conflict" description="In Ref. 1; AAA43108." ref="1">
    <original>N</original>
    <variation>T</variation>
    <location>
        <position position="433"/>
    </location>
</feature>
<feature type="sequence conflict" description="In Ref. 1; AAA43108." ref="1">
    <original>N</original>
    <variation>S</variation>
    <location>
        <position position="450"/>
    </location>
</feature>
<feature type="sequence conflict" description="In Ref. 1; AAA43108." ref="1">
    <original>F</original>
    <variation>Y</variation>
    <location>
        <position position="496"/>
    </location>
</feature>
<keyword id="KW-0167">Capsid protein</keyword>
<keyword id="KW-1139">Helical capsid protein</keyword>
<keyword id="KW-1048">Host nucleus</keyword>
<keyword id="KW-0945">Host-virus interaction</keyword>
<keyword id="KW-0687">Ribonucleoprotein</keyword>
<keyword id="KW-0694">RNA-binding</keyword>
<keyword id="KW-0543">Viral nucleoprotein</keyword>
<keyword id="KW-1163">Viral penetration into host nucleus</keyword>
<keyword id="KW-0946">Virion</keyword>
<keyword id="KW-1160">Virus entry into host cell</keyword>
<evidence type="ECO:0000255" key="1">
    <source>
        <dbReference type="HAMAP-Rule" id="MF_04070"/>
    </source>
</evidence>
<evidence type="ECO:0000256" key="2">
    <source>
        <dbReference type="SAM" id="MobiDB-lite"/>
    </source>
</evidence>
<proteinExistence type="inferred from homology"/>
<accession>P16980</accession>
<accession>Q20P39</accession>
<dbReference type="EMBL" id="M22572">
    <property type="protein sequence ID" value="AAA43108.1"/>
    <property type="molecule type" value="Genomic_RNA"/>
</dbReference>
<dbReference type="EMBL" id="M63748">
    <property type="protein sequence ID" value="AAA52233.1"/>
    <property type="molecule type" value="Genomic_RNA"/>
</dbReference>
<dbReference type="EMBL" id="CY005803">
    <property type="protein sequence ID" value="ABB20502.1"/>
    <property type="molecule type" value="Other_RNA"/>
</dbReference>
<dbReference type="PIR" id="D31470">
    <property type="entry name" value="VHIVN4"/>
</dbReference>
<dbReference type="SMR" id="P16980"/>
<dbReference type="Proteomes" id="UP000121173">
    <property type="component" value="Genome"/>
</dbReference>
<dbReference type="GO" id="GO:0019029">
    <property type="term" value="C:helical viral capsid"/>
    <property type="evidence" value="ECO:0007669"/>
    <property type="project" value="UniProtKB-UniRule"/>
</dbReference>
<dbReference type="GO" id="GO:0043657">
    <property type="term" value="C:host cell"/>
    <property type="evidence" value="ECO:0007669"/>
    <property type="project" value="GOC"/>
</dbReference>
<dbReference type="GO" id="GO:0042025">
    <property type="term" value="C:host cell nucleus"/>
    <property type="evidence" value="ECO:0007669"/>
    <property type="project" value="UniProtKB-SubCell"/>
</dbReference>
<dbReference type="GO" id="GO:1990904">
    <property type="term" value="C:ribonucleoprotein complex"/>
    <property type="evidence" value="ECO:0007669"/>
    <property type="project" value="UniProtKB-KW"/>
</dbReference>
<dbReference type="GO" id="GO:0019013">
    <property type="term" value="C:viral nucleocapsid"/>
    <property type="evidence" value="ECO:0007669"/>
    <property type="project" value="UniProtKB-UniRule"/>
</dbReference>
<dbReference type="GO" id="GO:0003723">
    <property type="term" value="F:RNA binding"/>
    <property type="evidence" value="ECO:0007669"/>
    <property type="project" value="UniProtKB-UniRule"/>
</dbReference>
<dbReference type="GO" id="GO:0005198">
    <property type="term" value="F:structural molecule activity"/>
    <property type="evidence" value="ECO:0007669"/>
    <property type="project" value="UniProtKB-UniRule"/>
</dbReference>
<dbReference type="GO" id="GO:0046718">
    <property type="term" value="P:symbiont entry into host cell"/>
    <property type="evidence" value="ECO:0007669"/>
    <property type="project" value="UniProtKB-KW"/>
</dbReference>
<dbReference type="GO" id="GO:0075732">
    <property type="term" value="P:viral penetration into host nucleus"/>
    <property type="evidence" value="ECO:0007669"/>
    <property type="project" value="UniProtKB-UniRule"/>
</dbReference>
<dbReference type="HAMAP" id="MF_04070">
    <property type="entry name" value="INFV_NCAP"/>
    <property type="match status" value="1"/>
</dbReference>
<dbReference type="InterPro" id="IPR002141">
    <property type="entry name" value="Flu_NP"/>
</dbReference>
<dbReference type="Pfam" id="PF00506">
    <property type="entry name" value="Flu_NP"/>
    <property type="match status" value="1"/>
</dbReference>
<dbReference type="SUPFAM" id="SSF161003">
    <property type="entry name" value="flu NP-like"/>
    <property type="match status" value="1"/>
</dbReference>
<organismHost>
    <name type="scientific">Aves</name>
    <dbReference type="NCBI Taxonomy" id="8782"/>
</organismHost>
<organismHost>
    <name type="scientific">Equus caballus</name>
    <name type="common">Horse</name>
    <dbReference type="NCBI Taxonomy" id="9796"/>
</organismHost>
<organismHost>
    <name type="scientific">Homo sapiens</name>
    <name type="common">Human</name>
    <dbReference type="NCBI Taxonomy" id="9606"/>
</organismHost>
<organismHost>
    <name type="scientific">Phocidae</name>
    <name type="common">true seals</name>
    <dbReference type="NCBI Taxonomy" id="9709"/>
</organismHost>
<organism>
    <name type="scientific">Influenza A virus (strain A/Equine/Prague/1/1956 H7N7)</name>
    <dbReference type="NCBI Taxonomy" id="380337"/>
    <lineage>
        <taxon>Viruses</taxon>
        <taxon>Riboviria</taxon>
        <taxon>Orthornavirae</taxon>
        <taxon>Negarnaviricota</taxon>
        <taxon>Polyploviricotina</taxon>
        <taxon>Insthoviricetes</taxon>
        <taxon>Articulavirales</taxon>
        <taxon>Orthomyxoviridae</taxon>
        <taxon>Alphainfluenzavirus</taxon>
        <taxon>Alphainfluenzavirus influenzae</taxon>
        <taxon>Influenza A virus</taxon>
    </lineage>
</organism>
<gene>
    <name evidence="1" type="primary">NP</name>
</gene>
<protein>
    <recommendedName>
        <fullName evidence="1">Nucleoprotein</fullName>
    </recommendedName>
    <alternativeName>
        <fullName evidence="1">Nucleocapsid protein</fullName>
        <shortName evidence="1">Protein N</shortName>
    </alternativeName>
</protein>
<sequence>MASQGTKRPYEQMETGGERQNATEIRASVGKMVGGIGRFYIQMCTELKLNDYEGRLIQNSITIEKMVLSAFDERRNKYLEEHPNTGKDPKKTGGPIYRKREGKWIRELILYDKEEIRRIWRQANNGEDATAGLTHLMIWHSNLNDATYQRTRALVRTGMDPRMCSLMQGSTLPRRSGAAGAAVKGIGTMVMELIRMIKRGINDRNFWRGENGRKTRIAYERMCNILKGKFQTAAQRAMMDQVRESRNPGNAEIEDLIFLARSALILRGSVAHKSCLPACVYGLIVASGYDFEREGYSLVGVDPFKLLQNSQIFSLIRPNENPAHKSQLVWMACHSAAFEDLRVSSFIRGTKVIPRGQLSTRGIQIASNENMETIDSNTLELRSRYWAIRTKSGGNTSQQKASAGQISVQPTFSVQRNLPFERTTIMAAFTGNNEGRTSDMRTEIIRMMENAKPDDVSFQGRGVFELSDEKATNPIVPSFDMSKEGSYFFGDNAEEFDN</sequence>
<reference key="1">
    <citation type="journal article" date="1989" name="Virology">
        <title>Two subtypes of nucleoproteins (NP) of influenza A viruses.</title>
        <authorList>
            <person name="Gammelin M."/>
            <person name="Mandler J."/>
            <person name="Scholtissek C."/>
        </authorList>
    </citation>
    <scope>NUCLEOTIDE SEQUENCE [GENOMIC RNA]</scope>
</reference>
<reference key="2">
    <citation type="journal article" date="1991" name="J. Virol.">
        <title>Evolution of influenza A virus nucleoprotein genes: implications for the origins of H1N1 human and classical swine viruses.</title>
        <authorList>
            <person name="Gorman O.T."/>
            <person name="Bean W.J."/>
            <person name="Kawaoka Y."/>
            <person name="Donatelli I."/>
            <person name="Guo Y."/>
            <person name="Webster R.G."/>
        </authorList>
    </citation>
    <scope>NUCLEOTIDE SEQUENCE [GENOMIC RNA]</scope>
</reference>
<reference key="3">
    <citation type="journal article" date="2006" name="Science">
        <title>Large-scale sequence analysis of avian influenza isolates.</title>
        <authorList>
            <person name="Obenauer J.C."/>
            <person name="Denson J."/>
            <person name="Mehta P.K."/>
            <person name="Su X."/>
            <person name="Mukatira S."/>
            <person name="Finkelstein D.B."/>
            <person name="Xu X."/>
            <person name="Wang J."/>
            <person name="Ma J."/>
            <person name="Fan Y."/>
            <person name="Rakestraw K.M."/>
            <person name="Webster R.G."/>
            <person name="Hoffmann E."/>
            <person name="Krauss S."/>
            <person name="Zheng J."/>
            <person name="Zhang Z."/>
            <person name="Naeve C.W."/>
        </authorList>
    </citation>
    <scope>NUCLEOTIDE SEQUENCE [GENOMIC RNA]</scope>
</reference>
<name>NCAP_I56A3</name>
<comment type="function">
    <text evidence="1">Encapsidates the negative strand viral RNA, protecting it from nucleases. The encapsidated genomic RNA is termed the ribonucleoprotein (RNP) and serves as template for transcription and replication. The RNP needs to be localized in the host nucleus to start an infectious cycle, but is too large to diffuse through the nuclear pore complex. NP comprises at least 2 nuclear localization signals that are responsible for the active RNP import into the nucleus through cellular importin alpha/beta pathway. Later in the infection, nclear export of RNPs are mediated through viral proteins NEP interacting with M1 which binds nucleoproteins. It is possible that nucleoprotein binds directly host exportin-1/XPO1 and plays an active role in RNPs nuclear export. M1 interaction with RNP seems to hide nucleoprotein's nuclear localization signals. Soon after a virion infects a new cell, M1 dissociates from the RNP under acidification of the virion driven by M2 protein. Dissociation of M1 from RNP unmasks nucleoprotein's nuclear localization signals, targeting the RNP to the nucleus.</text>
</comment>
<comment type="subunit">
    <text evidence="1">Homomultimerizes to form the nucleocapsid. May bind host exportin-1/XPO1. Binds to viral genomic RNA. Protein-RNA contacts are mediated by a combination of electrostatic interactions between positively charged residues and the phosphate backbone and planar interactions between aromatic side chains and bases.</text>
</comment>
<comment type="subcellular location">
    <subcellularLocation>
        <location evidence="1">Virion</location>
    </subcellularLocation>
    <subcellularLocation>
        <location evidence="1">Host nucleus</location>
    </subcellularLocation>
</comment>
<comment type="PTM">
    <text evidence="1">Late in virus-infected cells, may be cleaved from a 56-kDa protein to a 53-kDa protein by a cellular caspase. This cleavage might be a marker for the onset of apoptosis in infected cells or have a specific function in virus host interaction.</text>
</comment>
<comment type="similarity">
    <text evidence="1">Belongs to the influenza viruses nucleoprotein family.</text>
</comment>